<name>UBIB_SHIF8</name>
<reference key="1">
    <citation type="journal article" date="2006" name="BMC Genomics">
        <title>Complete genome sequence of Shigella flexneri 5b and comparison with Shigella flexneri 2a.</title>
        <authorList>
            <person name="Nie H."/>
            <person name="Yang F."/>
            <person name="Zhang X."/>
            <person name="Yang J."/>
            <person name="Chen L."/>
            <person name="Wang J."/>
            <person name="Xiong Z."/>
            <person name="Peng J."/>
            <person name="Sun L."/>
            <person name="Dong J."/>
            <person name="Xue Y."/>
            <person name="Xu X."/>
            <person name="Chen S."/>
            <person name="Yao Z."/>
            <person name="Shen Y."/>
            <person name="Jin Q."/>
        </authorList>
    </citation>
    <scope>NUCLEOTIDE SEQUENCE [LARGE SCALE GENOMIC DNA]</scope>
    <source>
        <strain>8401</strain>
    </source>
</reference>
<proteinExistence type="inferred from homology"/>
<dbReference type="EC" id="2.7.-.-" evidence="1"/>
<dbReference type="EMBL" id="CP000266">
    <property type="protein sequence ID" value="ABF05688.1"/>
    <property type="molecule type" value="Genomic_DNA"/>
</dbReference>
<dbReference type="RefSeq" id="WP_000187530.1">
    <property type="nucleotide sequence ID" value="NC_008258.1"/>
</dbReference>
<dbReference type="SMR" id="Q0SZ27"/>
<dbReference type="GeneID" id="75204829"/>
<dbReference type="KEGG" id="sfv:SFV_3663"/>
<dbReference type="HOGENOM" id="CLU_006533_0_0_6"/>
<dbReference type="UniPathway" id="UPA00232"/>
<dbReference type="Proteomes" id="UP000000659">
    <property type="component" value="Chromosome"/>
</dbReference>
<dbReference type="GO" id="GO:0005886">
    <property type="term" value="C:plasma membrane"/>
    <property type="evidence" value="ECO:0007669"/>
    <property type="project" value="UniProtKB-SubCell"/>
</dbReference>
<dbReference type="GO" id="GO:0005524">
    <property type="term" value="F:ATP binding"/>
    <property type="evidence" value="ECO:0007669"/>
    <property type="project" value="UniProtKB-KW"/>
</dbReference>
<dbReference type="GO" id="GO:0004672">
    <property type="term" value="F:protein kinase activity"/>
    <property type="evidence" value="ECO:0007669"/>
    <property type="project" value="UniProtKB-UniRule"/>
</dbReference>
<dbReference type="GO" id="GO:0010795">
    <property type="term" value="P:regulation of ubiquinone biosynthetic process"/>
    <property type="evidence" value="ECO:0007669"/>
    <property type="project" value="UniProtKB-UniRule"/>
</dbReference>
<dbReference type="GO" id="GO:0006744">
    <property type="term" value="P:ubiquinone biosynthetic process"/>
    <property type="evidence" value="ECO:0007669"/>
    <property type="project" value="UniProtKB-UniPathway"/>
</dbReference>
<dbReference type="CDD" id="cd13972">
    <property type="entry name" value="UbiB"/>
    <property type="match status" value="1"/>
</dbReference>
<dbReference type="HAMAP" id="MF_00414">
    <property type="entry name" value="UbiB"/>
    <property type="match status" value="1"/>
</dbReference>
<dbReference type="InterPro" id="IPR004147">
    <property type="entry name" value="ABC1_dom"/>
</dbReference>
<dbReference type="InterPro" id="IPR011009">
    <property type="entry name" value="Kinase-like_dom_sf"/>
</dbReference>
<dbReference type="InterPro" id="IPR010232">
    <property type="entry name" value="UbiB"/>
</dbReference>
<dbReference type="InterPro" id="IPR045308">
    <property type="entry name" value="UbiB_bact"/>
</dbReference>
<dbReference type="InterPro" id="IPR050154">
    <property type="entry name" value="UbiB_kinase"/>
</dbReference>
<dbReference type="NCBIfam" id="NF003404">
    <property type="entry name" value="PRK04750.1"/>
    <property type="match status" value="1"/>
</dbReference>
<dbReference type="NCBIfam" id="TIGR01982">
    <property type="entry name" value="UbiB"/>
    <property type="match status" value="1"/>
</dbReference>
<dbReference type="PANTHER" id="PTHR10566">
    <property type="entry name" value="CHAPERONE-ACTIVITY OF BC1 COMPLEX CABC1 -RELATED"/>
    <property type="match status" value="1"/>
</dbReference>
<dbReference type="PANTHER" id="PTHR10566:SF113">
    <property type="entry name" value="PROTEIN ACTIVITY OF BC1 COMPLEX KINASE 7, CHLOROPLASTIC"/>
    <property type="match status" value="1"/>
</dbReference>
<dbReference type="Pfam" id="PF03109">
    <property type="entry name" value="ABC1"/>
    <property type="match status" value="1"/>
</dbReference>
<dbReference type="SUPFAM" id="SSF56112">
    <property type="entry name" value="Protein kinase-like (PK-like)"/>
    <property type="match status" value="1"/>
</dbReference>
<comment type="function">
    <text evidence="1">Is probably a protein kinase regulator of UbiI activity which is involved in aerobic coenzyme Q (ubiquinone) biosynthesis.</text>
</comment>
<comment type="pathway">
    <text>Cofactor biosynthesis; ubiquinone biosynthesis [regulation].</text>
</comment>
<comment type="subcellular location">
    <subcellularLocation>
        <location evidence="1">Cell inner membrane</location>
        <topology evidence="1">Multi-pass membrane protein</topology>
    </subcellularLocation>
</comment>
<comment type="similarity">
    <text evidence="1">Belongs to the ABC1 family. UbiB subfamily.</text>
</comment>
<protein>
    <recommendedName>
        <fullName evidence="1">Probable protein kinase UbiB</fullName>
        <ecNumber evidence="1">2.7.-.-</ecNumber>
    </recommendedName>
    <alternativeName>
        <fullName evidence="1">Ubiquinone biosynthesis protein UbiB</fullName>
    </alternativeName>
</protein>
<organism>
    <name type="scientific">Shigella flexneri serotype 5b (strain 8401)</name>
    <dbReference type="NCBI Taxonomy" id="373384"/>
    <lineage>
        <taxon>Bacteria</taxon>
        <taxon>Pseudomonadati</taxon>
        <taxon>Pseudomonadota</taxon>
        <taxon>Gammaproteobacteria</taxon>
        <taxon>Enterobacterales</taxon>
        <taxon>Enterobacteriaceae</taxon>
        <taxon>Shigella</taxon>
    </lineage>
</organism>
<keyword id="KW-0067">ATP-binding</keyword>
<keyword id="KW-0997">Cell inner membrane</keyword>
<keyword id="KW-1003">Cell membrane</keyword>
<keyword id="KW-0418">Kinase</keyword>
<keyword id="KW-0472">Membrane</keyword>
<keyword id="KW-0547">Nucleotide-binding</keyword>
<keyword id="KW-0808">Transferase</keyword>
<keyword id="KW-0812">Transmembrane</keyword>
<keyword id="KW-1133">Transmembrane helix</keyword>
<keyword id="KW-0831">Ubiquinone biosynthesis</keyword>
<feature type="chain" id="PRO_1000050066" description="Probable protein kinase UbiB">
    <location>
        <begin position="1"/>
        <end position="546"/>
    </location>
</feature>
<feature type="transmembrane region" description="Helical" evidence="1">
    <location>
        <begin position="501"/>
        <end position="521"/>
    </location>
</feature>
<feature type="transmembrane region" description="Helical" evidence="1">
    <location>
        <begin position="522"/>
        <end position="542"/>
    </location>
</feature>
<feature type="domain" description="Protein kinase" evidence="1">
    <location>
        <begin position="124"/>
        <end position="502"/>
    </location>
</feature>
<feature type="active site" description="Proton acceptor" evidence="1">
    <location>
        <position position="288"/>
    </location>
</feature>
<feature type="binding site" evidence="1">
    <location>
        <begin position="130"/>
        <end position="138"/>
    </location>
    <ligand>
        <name>ATP</name>
        <dbReference type="ChEBI" id="CHEBI:30616"/>
    </ligand>
</feature>
<feature type="binding site" evidence="1">
    <location>
        <position position="153"/>
    </location>
    <ligand>
        <name>ATP</name>
        <dbReference type="ChEBI" id="CHEBI:30616"/>
    </ligand>
</feature>
<gene>
    <name evidence="1" type="primary">ubiB</name>
    <name type="ordered locus">SFV_3663</name>
</gene>
<sequence>MTPGEVRRLYFIIRTFLSYGLDELIPKMRITLPLRLWRYSLFWMPNRHKDKLLGERLRLALQELGPVWIKFGQMLSTRRDLFPPHIADQLALLQDKVAPFDGKLAKQQIEAAMGGLPVEAWFDDFEIKPLASASIAQVHTARLKSNGKEVVIKVIRPDILPVIKADLKLIYRLARWVPRLLPDGRRLRPTEVVREYEKTLIDELNLLRESANAIQLRRNFEDSPMLYIPEVYPDYCSEGMMVMERIYGIPVSDVAALEKNGTNMKLLAERGVQVFFTQVFRDSFFHADMHPGNIFVSYEHPENPKYIGIDCGIVGSLNKEDKRYLAENFIAFFNRDYRKVAELHVDSGWVPPDTNVEEFEFAIRTVCEPIFEKPLAEISFGHVLLNLFNTARRFNMEVQPQLVLLQKTLLYVEGVGRQLYPQLDLWKTAKPFLESWIKDQVGIPALVRAFKEKAPFWVEKMPELPELVYDSLRQGKYLQHSVDKIARELQSNHVRQGQSRYFLGIGATLVLSGTFLLVSRPEWGLMPGWLMAGGLIAWFVGWRKTR</sequence>
<accession>Q0SZ27</accession>
<evidence type="ECO:0000255" key="1">
    <source>
        <dbReference type="HAMAP-Rule" id="MF_00414"/>
    </source>
</evidence>